<feature type="chain" id="PRO_0000228109" description="Mitochondrial assembly of ribosomal large subunit protein 1">
    <location>
        <begin position="1"/>
        <end position="228"/>
    </location>
</feature>
<feature type="region of interest" description="Disordered" evidence="2">
    <location>
        <begin position="53"/>
        <end position="77"/>
    </location>
</feature>
<protein>
    <recommendedName>
        <fullName>Mitochondrial assembly of ribosomal large subunit protein 1</fullName>
    </recommendedName>
</protein>
<name>MASU1_MOUSE</name>
<evidence type="ECO:0000250" key="1">
    <source>
        <dbReference type="UniProtKB" id="Q96EH3"/>
    </source>
</evidence>
<evidence type="ECO:0000256" key="2">
    <source>
        <dbReference type="SAM" id="MobiDB-lite"/>
    </source>
</evidence>
<evidence type="ECO:0000305" key="3"/>
<keyword id="KW-0496">Mitochondrion</keyword>
<keyword id="KW-1185">Reference proteome</keyword>
<keyword id="KW-0690">Ribosome biogenesis</keyword>
<gene>
    <name type="primary">Malsu1</name>
</gene>
<organism>
    <name type="scientific">Mus musculus</name>
    <name type="common">Mouse</name>
    <dbReference type="NCBI Taxonomy" id="10090"/>
    <lineage>
        <taxon>Eukaryota</taxon>
        <taxon>Metazoa</taxon>
        <taxon>Chordata</taxon>
        <taxon>Craniata</taxon>
        <taxon>Vertebrata</taxon>
        <taxon>Euteleostomi</taxon>
        <taxon>Mammalia</taxon>
        <taxon>Eutheria</taxon>
        <taxon>Euarchontoglires</taxon>
        <taxon>Glires</taxon>
        <taxon>Rodentia</taxon>
        <taxon>Myomorpha</taxon>
        <taxon>Muroidea</taxon>
        <taxon>Muridae</taxon>
        <taxon>Murinae</taxon>
        <taxon>Mus</taxon>
        <taxon>Mus</taxon>
    </lineage>
</organism>
<reference key="1">
    <citation type="journal article" date="2005" name="Science">
        <title>The transcriptional landscape of the mammalian genome.</title>
        <authorList>
            <person name="Carninci P."/>
            <person name="Kasukawa T."/>
            <person name="Katayama S."/>
            <person name="Gough J."/>
            <person name="Frith M.C."/>
            <person name="Maeda N."/>
            <person name="Oyama R."/>
            <person name="Ravasi T."/>
            <person name="Lenhard B."/>
            <person name="Wells C."/>
            <person name="Kodzius R."/>
            <person name="Shimokawa K."/>
            <person name="Bajic V.B."/>
            <person name="Brenner S.E."/>
            <person name="Batalov S."/>
            <person name="Forrest A.R."/>
            <person name="Zavolan M."/>
            <person name="Davis M.J."/>
            <person name="Wilming L.G."/>
            <person name="Aidinis V."/>
            <person name="Allen J.E."/>
            <person name="Ambesi-Impiombato A."/>
            <person name="Apweiler R."/>
            <person name="Aturaliya R.N."/>
            <person name="Bailey T.L."/>
            <person name="Bansal M."/>
            <person name="Baxter L."/>
            <person name="Beisel K.W."/>
            <person name="Bersano T."/>
            <person name="Bono H."/>
            <person name="Chalk A.M."/>
            <person name="Chiu K.P."/>
            <person name="Choudhary V."/>
            <person name="Christoffels A."/>
            <person name="Clutterbuck D.R."/>
            <person name="Crowe M.L."/>
            <person name="Dalla E."/>
            <person name="Dalrymple B.P."/>
            <person name="de Bono B."/>
            <person name="Della Gatta G."/>
            <person name="di Bernardo D."/>
            <person name="Down T."/>
            <person name="Engstrom P."/>
            <person name="Fagiolini M."/>
            <person name="Faulkner G."/>
            <person name="Fletcher C.F."/>
            <person name="Fukushima T."/>
            <person name="Furuno M."/>
            <person name="Futaki S."/>
            <person name="Gariboldi M."/>
            <person name="Georgii-Hemming P."/>
            <person name="Gingeras T.R."/>
            <person name="Gojobori T."/>
            <person name="Green R.E."/>
            <person name="Gustincich S."/>
            <person name="Harbers M."/>
            <person name="Hayashi Y."/>
            <person name="Hensch T.K."/>
            <person name="Hirokawa N."/>
            <person name="Hill D."/>
            <person name="Huminiecki L."/>
            <person name="Iacono M."/>
            <person name="Ikeo K."/>
            <person name="Iwama A."/>
            <person name="Ishikawa T."/>
            <person name="Jakt M."/>
            <person name="Kanapin A."/>
            <person name="Katoh M."/>
            <person name="Kawasawa Y."/>
            <person name="Kelso J."/>
            <person name="Kitamura H."/>
            <person name="Kitano H."/>
            <person name="Kollias G."/>
            <person name="Krishnan S.P."/>
            <person name="Kruger A."/>
            <person name="Kummerfeld S.K."/>
            <person name="Kurochkin I.V."/>
            <person name="Lareau L.F."/>
            <person name="Lazarevic D."/>
            <person name="Lipovich L."/>
            <person name="Liu J."/>
            <person name="Liuni S."/>
            <person name="McWilliam S."/>
            <person name="Madan Babu M."/>
            <person name="Madera M."/>
            <person name="Marchionni L."/>
            <person name="Matsuda H."/>
            <person name="Matsuzawa S."/>
            <person name="Miki H."/>
            <person name="Mignone F."/>
            <person name="Miyake S."/>
            <person name="Morris K."/>
            <person name="Mottagui-Tabar S."/>
            <person name="Mulder N."/>
            <person name="Nakano N."/>
            <person name="Nakauchi H."/>
            <person name="Ng P."/>
            <person name="Nilsson R."/>
            <person name="Nishiguchi S."/>
            <person name="Nishikawa S."/>
            <person name="Nori F."/>
            <person name="Ohara O."/>
            <person name="Okazaki Y."/>
            <person name="Orlando V."/>
            <person name="Pang K.C."/>
            <person name="Pavan W.J."/>
            <person name="Pavesi G."/>
            <person name="Pesole G."/>
            <person name="Petrovsky N."/>
            <person name="Piazza S."/>
            <person name="Reed J."/>
            <person name="Reid J.F."/>
            <person name="Ring B.Z."/>
            <person name="Ringwald M."/>
            <person name="Rost B."/>
            <person name="Ruan Y."/>
            <person name="Salzberg S.L."/>
            <person name="Sandelin A."/>
            <person name="Schneider C."/>
            <person name="Schoenbach C."/>
            <person name="Sekiguchi K."/>
            <person name="Semple C.A."/>
            <person name="Seno S."/>
            <person name="Sessa L."/>
            <person name="Sheng Y."/>
            <person name="Shibata Y."/>
            <person name="Shimada H."/>
            <person name="Shimada K."/>
            <person name="Silva D."/>
            <person name="Sinclair B."/>
            <person name="Sperling S."/>
            <person name="Stupka E."/>
            <person name="Sugiura K."/>
            <person name="Sultana R."/>
            <person name="Takenaka Y."/>
            <person name="Taki K."/>
            <person name="Tammoja K."/>
            <person name="Tan S.L."/>
            <person name="Tang S."/>
            <person name="Taylor M.S."/>
            <person name="Tegner J."/>
            <person name="Teichmann S.A."/>
            <person name="Ueda H.R."/>
            <person name="van Nimwegen E."/>
            <person name="Verardo R."/>
            <person name="Wei C.L."/>
            <person name="Yagi K."/>
            <person name="Yamanishi H."/>
            <person name="Zabarovsky E."/>
            <person name="Zhu S."/>
            <person name="Zimmer A."/>
            <person name="Hide W."/>
            <person name="Bult C."/>
            <person name="Grimmond S.M."/>
            <person name="Teasdale R.D."/>
            <person name="Liu E.T."/>
            <person name="Brusic V."/>
            <person name="Quackenbush J."/>
            <person name="Wahlestedt C."/>
            <person name="Mattick J.S."/>
            <person name="Hume D.A."/>
            <person name="Kai C."/>
            <person name="Sasaki D."/>
            <person name="Tomaru Y."/>
            <person name="Fukuda S."/>
            <person name="Kanamori-Katayama M."/>
            <person name="Suzuki M."/>
            <person name="Aoki J."/>
            <person name="Arakawa T."/>
            <person name="Iida J."/>
            <person name="Imamura K."/>
            <person name="Itoh M."/>
            <person name="Kato T."/>
            <person name="Kawaji H."/>
            <person name="Kawagashira N."/>
            <person name="Kawashima T."/>
            <person name="Kojima M."/>
            <person name="Kondo S."/>
            <person name="Konno H."/>
            <person name="Nakano K."/>
            <person name="Ninomiya N."/>
            <person name="Nishio T."/>
            <person name="Okada M."/>
            <person name="Plessy C."/>
            <person name="Shibata K."/>
            <person name="Shiraki T."/>
            <person name="Suzuki S."/>
            <person name="Tagami M."/>
            <person name="Waki K."/>
            <person name="Watahiki A."/>
            <person name="Okamura-Oho Y."/>
            <person name="Suzuki H."/>
            <person name="Kawai J."/>
            <person name="Hayashizaki Y."/>
        </authorList>
    </citation>
    <scope>NUCLEOTIDE SEQUENCE [LARGE SCALE MRNA]</scope>
    <source>
        <strain>C57BL/6J</strain>
        <tissue>Medulla oblongata</tissue>
    </source>
</reference>
<reference key="2">
    <citation type="journal article" date="2010" name="Cell">
        <title>A tissue-specific atlas of mouse protein phosphorylation and expression.</title>
        <authorList>
            <person name="Huttlin E.L."/>
            <person name="Jedrychowski M.P."/>
            <person name="Elias J.E."/>
            <person name="Goswami T."/>
            <person name="Rad R."/>
            <person name="Beausoleil S.A."/>
            <person name="Villen J."/>
            <person name="Haas W."/>
            <person name="Sowa M.E."/>
            <person name="Gygi S.P."/>
        </authorList>
    </citation>
    <scope>IDENTIFICATION BY MASS SPECTROMETRY [LARGE SCALE ANALYSIS]</scope>
    <source>
        <tissue>Brain</tissue>
        <tissue>Brown adipose tissue</tissue>
        <tissue>Heart</tissue>
        <tissue>Kidney</tissue>
        <tissue>Liver</tissue>
        <tissue>Spleen</tissue>
        <tissue>Testis</tissue>
    </source>
</reference>
<sequence>MGPGWSPARRLWPLLWRRAVFQRAGPAMASVPWLPRLAERWLPARPATCLTPSLTRGLHHGPQPEERTAGDARLQPGPADHIGAKFDIDMLVSLLRQENARDICVIQVPPEMRYTDYFVIGSGTSTRHLHAMVHYLVKMYKHLKCRSDPYVKIEGKDADDWLCVDFGSMVIHLMLPETRETYELEKLWTLRSFDDQLAQIAAETLPEDFILGLEDDTSSLTPVEFKCK</sequence>
<accession>Q9CWV0</accession>
<comment type="function">
    <text evidence="1">Required for normal mitochondrial ribosome function and mitochondrial translation. May play a role in ribosome biogenesis by preventing premature association of the 28S and 39S ribosomal subunits. Interacts with mitochondrial ribosomal protein uL14m (MRPL14), probably blocking formation of intersubunit bridge B8, preventing association of the 28S and 39S ribosomal subunits. Addition to isolated mitochondrial ribosomal subunits partially inhibits translation, probably by interfering with the association of the 28S and 39S ribosomal subunits and the formation of functional ribosomes. May also participate in the assembly and/or regulation of the stability of the large subunit of the mitochondrial ribosome. May function as a ribosomal silencing factor.</text>
</comment>
<comment type="subunit">
    <text evidence="1">Associates with the mitochondrial ribosome large subunit (39S) via interaction with MRPL12 and/or MRPL14. The interaction generates steric hindrance that is expected to prevent premature association of the 28S and 39S ribosomal subunits. Identified in a complex composed of MALSU1, MIEF1 upstream open reading frame protein and NDUFAB1; within the trimeric complex, MIEF1 upstream open reading frame protein functions as a bridging scaffold that interacts with MALSU1 on one side, and with NDUFAB1 on the other side. Interacts with MRPL12 and MRPL14.</text>
</comment>
<comment type="subcellular location">
    <subcellularLocation>
        <location evidence="1">Mitochondrion matrix</location>
    </subcellularLocation>
    <text evidence="1">Colocalizes with MRPL12 and/or MRPL14.</text>
</comment>
<comment type="similarity">
    <text evidence="3">Belongs to the Iojap/RsfS family.</text>
</comment>
<proteinExistence type="evidence at protein level"/>
<dbReference type="EMBL" id="AK010366">
    <property type="protein sequence ID" value="BAB26886.1"/>
    <property type="molecule type" value="mRNA"/>
</dbReference>
<dbReference type="EMBL" id="AK031878">
    <property type="protein sequence ID" value="BAC27589.1"/>
    <property type="molecule type" value="mRNA"/>
</dbReference>
<dbReference type="CCDS" id="CCDS51768.1"/>
<dbReference type="RefSeq" id="NP_083629.1">
    <property type="nucleotide sequence ID" value="NM_029353.1"/>
</dbReference>
<dbReference type="SMR" id="Q9CWV0"/>
<dbReference type="BioGRID" id="217601">
    <property type="interactions" value="2"/>
</dbReference>
<dbReference type="FunCoup" id="Q9CWV0">
    <property type="interactions" value="1131"/>
</dbReference>
<dbReference type="STRING" id="10090.ENSMUSP00000122941"/>
<dbReference type="iPTMnet" id="Q9CWV0"/>
<dbReference type="PhosphoSitePlus" id="Q9CWV0"/>
<dbReference type="PaxDb" id="10090-ENSMUSP00000122941"/>
<dbReference type="ProteomicsDB" id="287314"/>
<dbReference type="Pumba" id="Q9CWV0"/>
<dbReference type="Antibodypedia" id="12100">
    <property type="antibodies" value="55 antibodies from 14 providers"/>
</dbReference>
<dbReference type="Ensembl" id="ENSMUST00000128616.6">
    <property type="protein sequence ID" value="ENSMUSP00000122941.3"/>
    <property type="gene ID" value="ENSMUSG00000029815.13"/>
</dbReference>
<dbReference type="GeneID" id="75593"/>
<dbReference type="KEGG" id="mmu:75593"/>
<dbReference type="UCSC" id="uc009bwg.2">
    <property type="organism name" value="mouse"/>
</dbReference>
<dbReference type="AGR" id="MGI:1922843"/>
<dbReference type="CTD" id="115416"/>
<dbReference type="MGI" id="MGI:1922843">
    <property type="gene designation" value="Malsu1"/>
</dbReference>
<dbReference type="VEuPathDB" id="HostDB:ENSMUSG00000029815"/>
<dbReference type="eggNOG" id="KOG3212">
    <property type="taxonomic scope" value="Eukaryota"/>
</dbReference>
<dbReference type="GeneTree" id="ENSGT00390000015035"/>
<dbReference type="InParanoid" id="Q9CWV0"/>
<dbReference type="OMA" id="HLKCKHD"/>
<dbReference type="OrthoDB" id="21330at2759"/>
<dbReference type="PhylomeDB" id="Q9CWV0"/>
<dbReference type="BioGRID-ORCS" id="75593">
    <property type="hits" value="9 hits in 77 CRISPR screens"/>
</dbReference>
<dbReference type="ChiTaRS" id="Malsu1">
    <property type="organism name" value="mouse"/>
</dbReference>
<dbReference type="PRO" id="PR:Q9CWV0"/>
<dbReference type="Proteomes" id="UP000000589">
    <property type="component" value="Chromosome 6"/>
</dbReference>
<dbReference type="RNAct" id="Q9CWV0">
    <property type="molecule type" value="protein"/>
</dbReference>
<dbReference type="Bgee" id="ENSMUSG00000029815">
    <property type="expression patterns" value="Expressed in gastrocnemius medialis and 220 other cell types or tissues"/>
</dbReference>
<dbReference type="ExpressionAtlas" id="Q9CWV0">
    <property type="expression patterns" value="baseline and differential"/>
</dbReference>
<dbReference type="GO" id="GO:0005829">
    <property type="term" value="C:cytosol"/>
    <property type="evidence" value="ECO:0007669"/>
    <property type="project" value="Ensembl"/>
</dbReference>
<dbReference type="GO" id="GO:0005759">
    <property type="term" value="C:mitochondrial matrix"/>
    <property type="evidence" value="ECO:0007669"/>
    <property type="project" value="UniProtKB-SubCell"/>
</dbReference>
<dbReference type="GO" id="GO:0005739">
    <property type="term" value="C:mitochondrion"/>
    <property type="evidence" value="ECO:0000250"/>
    <property type="project" value="UniProtKB"/>
</dbReference>
<dbReference type="GO" id="GO:0140978">
    <property type="term" value="F:mitochondrial large ribosomal subunit binding"/>
    <property type="evidence" value="ECO:0000250"/>
    <property type="project" value="UniProtKB"/>
</dbReference>
<dbReference type="GO" id="GO:0070130">
    <property type="term" value="P:negative regulation of mitochondrial translation"/>
    <property type="evidence" value="ECO:0007669"/>
    <property type="project" value="Ensembl"/>
</dbReference>
<dbReference type="GO" id="GO:0042273">
    <property type="term" value="P:ribosomal large subunit biogenesis"/>
    <property type="evidence" value="ECO:0000250"/>
    <property type="project" value="UniProtKB"/>
</dbReference>
<dbReference type="FunFam" id="3.30.460.10:FF:000018">
    <property type="entry name" value="Mitochondrial assembly of ribosomal large subunit 1"/>
    <property type="match status" value="1"/>
</dbReference>
<dbReference type="Gene3D" id="3.30.460.10">
    <property type="entry name" value="Beta Polymerase, domain 2"/>
    <property type="match status" value="1"/>
</dbReference>
<dbReference type="HAMAP" id="MF_01477">
    <property type="entry name" value="Iojap_RsfS"/>
    <property type="match status" value="1"/>
</dbReference>
<dbReference type="InterPro" id="IPR004394">
    <property type="entry name" value="Iojap/RsfS/C7orf30"/>
</dbReference>
<dbReference type="InterPro" id="IPR043519">
    <property type="entry name" value="NT_sf"/>
</dbReference>
<dbReference type="NCBIfam" id="TIGR00090">
    <property type="entry name" value="rsfS_iojap_ybeB"/>
    <property type="match status" value="1"/>
</dbReference>
<dbReference type="PANTHER" id="PTHR21043">
    <property type="entry name" value="IOJAP SUPERFAMILY ORTHOLOG"/>
    <property type="match status" value="1"/>
</dbReference>
<dbReference type="PANTHER" id="PTHR21043:SF0">
    <property type="entry name" value="MITOCHONDRIAL ASSEMBLY OF RIBOSOMAL LARGE SUBUNIT PROTEIN 1"/>
    <property type="match status" value="1"/>
</dbReference>
<dbReference type="Pfam" id="PF02410">
    <property type="entry name" value="RsfS"/>
    <property type="match status" value="1"/>
</dbReference>
<dbReference type="SUPFAM" id="SSF81301">
    <property type="entry name" value="Nucleotidyltransferase"/>
    <property type="match status" value="1"/>
</dbReference>